<evidence type="ECO:0000255" key="1">
    <source>
        <dbReference type="HAMAP-Rule" id="MF_01640"/>
    </source>
</evidence>
<protein>
    <recommendedName>
        <fullName evidence="1">D-erythrose-4-phosphate dehydrogenase</fullName>
        <shortName evidence="1">E4PDH</shortName>
        <ecNumber evidence="1">1.2.1.72</ecNumber>
    </recommendedName>
</protein>
<feature type="chain" id="PRO_1000186837" description="D-erythrose-4-phosphate dehydrogenase">
    <location>
        <begin position="1"/>
        <end position="348"/>
    </location>
</feature>
<feature type="active site" description="Nucleophile" evidence="1">
    <location>
        <position position="155"/>
    </location>
</feature>
<feature type="binding site" evidence="1">
    <location>
        <begin position="12"/>
        <end position="13"/>
    </location>
    <ligand>
        <name>NAD(+)</name>
        <dbReference type="ChEBI" id="CHEBI:57540"/>
    </ligand>
</feature>
<feature type="binding site" evidence="1">
    <location>
        <position position="81"/>
    </location>
    <ligand>
        <name>NAD(+)</name>
        <dbReference type="ChEBI" id="CHEBI:57540"/>
    </ligand>
</feature>
<feature type="binding site" evidence="1">
    <location>
        <begin position="154"/>
        <end position="156"/>
    </location>
    <ligand>
        <name>substrate</name>
    </ligand>
</feature>
<feature type="binding site" evidence="1">
    <location>
        <position position="200"/>
    </location>
    <ligand>
        <name>substrate</name>
    </ligand>
</feature>
<feature type="binding site" evidence="1">
    <location>
        <begin position="213"/>
        <end position="214"/>
    </location>
    <ligand>
        <name>substrate</name>
    </ligand>
</feature>
<feature type="binding site" evidence="1">
    <location>
        <position position="236"/>
    </location>
    <ligand>
        <name>substrate</name>
    </ligand>
</feature>
<feature type="binding site" evidence="1">
    <location>
        <position position="318"/>
    </location>
    <ligand>
        <name>NAD(+)</name>
        <dbReference type="ChEBI" id="CHEBI:57540"/>
    </ligand>
</feature>
<feature type="site" description="Activates thiol group during catalysis" evidence="1">
    <location>
        <position position="182"/>
    </location>
</feature>
<keyword id="KW-0963">Cytoplasm</keyword>
<keyword id="KW-0520">NAD</keyword>
<keyword id="KW-0560">Oxidoreductase</keyword>
<keyword id="KW-0664">Pyridoxine biosynthesis</keyword>
<proteinExistence type="inferred from homology"/>
<name>E4PD_SALNS</name>
<sequence>MTVRIAINGFGRIGRNVVRALYESGRRAEITVVAINELADAAGMAHLLKYDTSHGRFAWEVRHEREQLFVGDDVIRILHERTLADLPWRELGVDVVLDCTGVYGNREHGEAHIAAGAKKVLFSHPGSNDLDATVVFGVNQNQLRAEHRIVSNASCTTNCIIPVIKLLDDAYGIESGTVTTIHSAMNDQQVIDAYHSDLRRTRAASQSIIPVDTKLAAGITRIFPQFNDRFEAIAVRVPTINVTAIDLSVTVKKPVKASEVNQLLQKAAQGAFHGIVDYTESPLVSIDFNHDPHSAIVDGTQTRVSGAHLIKTLVWCDNEWGFANRMLDTTLAMAAVGFRLDASASTKL</sequence>
<dbReference type="EC" id="1.2.1.72" evidence="1"/>
<dbReference type="EMBL" id="CP001113">
    <property type="protein sequence ID" value="ACF62101.1"/>
    <property type="molecule type" value="Genomic_DNA"/>
</dbReference>
<dbReference type="RefSeq" id="WP_000218338.1">
    <property type="nucleotide sequence ID" value="NZ_CCMR01000001.1"/>
</dbReference>
<dbReference type="SMR" id="B4T5H2"/>
<dbReference type="KEGG" id="see:SNSL254_A3310"/>
<dbReference type="HOGENOM" id="CLU_030140_0_0_6"/>
<dbReference type="UniPathway" id="UPA00244">
    <property type="reaction ID" value="UER00309"/>
</dbReference>
<dbReference type="Proteomes" id="UP000008824">
    <property type="component" value="Chromosome"/>
</dbReference>
<dbReference type="GO" id="GO:0005737">
    <property type="term" value="C:cytoplasm"/>
    <property type="evidence" value="ECO:0007669"/>
    <property type="project" value="UniProtKB-SubCell"/>
</dbReference>
<dbReference type="GO" id="GO:0048001">
    <property type="term" value="F:erythrose-4-phosphate dehydrogenase activity"/>
    <property type="evidence" value="ECO:0007669"/>
    <property type="project" value="UniProtKB-UniRule"/>
</dbReference>
<dbReference type="GO" id="GO:0051287">
    <property type="term" value="F:NAD binding"/>
    <property type="evidence" value="ECO:0007669"/>
    <property type="project" value="InterPro"/>
</dbReference>
<dbReference type="GO" id="GO:0050661">
    <property type="term" value="F:NADP binding"/>
    <property type="evidence" value="ECO:0007669"/>
    <property type="project" value="InterPro"/>
</dbReference>
<dbReference type="GO" id="GO:0006006">
    <property type="term" value="P:glucose metabolic process"/>
    <property type="evidence" value="ECO:0007669"/>
    <property type="project" value="InterPro"/>
</dbReference>
<dbReference type="GO" id="GO:0042823">
    <property type="term" value="P:pyridoxal phosphate biosynthetic process"/>
    <property type="evidence" value="ECO:0007669"/>
    <property type="project" value="UniProtKB-UniRule"/>
</dbReference>
<dbReference type="GO" id="GO:0008615">
    <property type="term" value="P:pyridoxine biosynthetic process"/>
    <property type="evidence" value="ECO:0007669"/>
    <property type="project" value="UniProtKB-UniRule"/>
</dbReference>
<dbReference type="CDD" id="cd23937">
    <property type="entry name" value="GAPDH_C_E4PDH"/>
    <property type="match status" value="1"/>
</dbReference>
<dbReference type="CDD" id="cd17892">
    <property type="entry name" value="GAPDH_N_E4PDH"/>
    <property type="match status" value="1"/>
</dbReference>
<dbReference type="FunFam" id="3.30.360.10:FF:000007">
    <property type="entry name" value="D-erythrose-4-phosphate dehydrogenase"/>
    <property type="match status" value="1"/>
</dbReference>
<dbReference type="FunFam" id="3.40.50.720:FF:000001">
    <property type="entry name" value="Glyceraldehyde-3-phosphate dehydrogenase"/>
    <property type="match status" value="1"/>
</dbReference>
<dbReference type="Gene3D" id="3.30.360.10">
    <property type="entry name" value="Dihydrodipicolinate Reductase, domain 2"/>
    <property type="match status" value="1"/>
</dbReference>
<dbReference type="Gene3D" id="3.40.50.720">
    <property type="entry name" value="NAD(P)-binding Rossmann-like Domain"/>
    <property type="match status" value="1"/>
</dbReference>
<dbReference type="HAMAP" id="MF_01640">
    <property type="entry name" value="E4P_dehydrog"/>
    <property type="match status" value="1"/>
</dbReference>
<dbReference type="InterPro" id="IPR006422">
    <property type="entry name" value="E4P_DH_bac"/>
</dbReference>
<dbReference type="InterPro" id="IPR020831">
    <property type="entry name" value="GlycerAld/Erythrose_P_DH"/>
</dbReference>
<dbReference type="InterPro" id="IPR020830">
    <property type="entry name" value="GlycerAld_3-P_DH_AS"/>
</dbReference>
<dbReference type="InterPro" id="IPR020829">
    <property type="entry name" value="GlycerAld_3-P_DH_cat"/>
</dbReference>
<dbReference type="InterPro" id="IPR020828">
    <property type="entry name" value="GlycerAld_3-P_DH_NAD(P)-bd"/>
</dbReference>
<dbReference type="InterPro" id="IPR006424">
    <property type="entry name" value="Glyceraldehyde-3-P_DH_1"/>
</dbReference>
<dbReference type="InterPro" id="IPR036291">
    <property type="entry name" value="NAD(P)-bd_dom_sf"/>
</dbReference>
<dbReference type="NCBIfam" id="TIGR01532">
    <property type="entry name" value="E4PD_g-proteo"/>
    <property type="match status" value="1"/>
</dbReference>
<dbReference type="NCBIfam" id="TIGR01534">
    <property type="entry name" value="GAPDH-I"/>
    <property type="match status" value="1"/>
</dbReference>
<dbReference type="NCBIfam" id="NF010058">
    <property type="entry name" value="PRK13535.1"/>
    <property type="match status" value="1"/>
</dbReference>
<dbReference type="PANTHER" id="PTHR43148">
    <property type="entry name" value="GLYCERALDEHYDE-3-PHOSPHATE DEHYDROGENASE 2"/>
    <property type="match status" value="1"/>
</dbReference>
<dbReference type="Pfam" id="PF02800">
    <property type="entry name" value="Gp_dh_C"/>
    <property type="match status" value="1"/>
</dbReference>
<dbReference type="Pfam" id="PF00044">
    <property type="entry name" value="Gp_dh_N"/>
    <property type="match status" value="1"/>
</dbReference>
<dbReference type="PIRSF" id="PIRSF000149">
    <property type="entry name" value="GAP_DH"/>
    <property type="match status" value="1"/>
</dbReference>
<dbReference type="PRINTS" id="PR00078">
    <property type="entry name" value="G3PDHDRGNASE"/>
</dbReference>
<dbReference type="SMART" id="SM00846">
    <property type="entry name" value="Gp_dh_N"/>
    <property type="match status" value="1"/>
</dbReference>
<dbReference type="SUPFAM" id="SSF55347">
    <property type="entry name" value="Glyceraldehyde-3-phosphate dehydrogenase-like, C-terminal domain"/>
    <property type="match status" value="1"/>
</dbReference>
<dbReference type="SUPFAM" id="SSF51735">
    <property type="entry name" value="NAD(P)-binding Rossmann-fold domains"/>
    <property type="match status" value="1"/>
</dbReference>
<dbReference type="PROSITE" id="PS00071">
    <property type="entry name" value="GAPDH"/>
    <property type="match status" value="1"/>
</dbReference>
<gene>
    <name evidence="1" type="primary">epd</name>
    <name type="ordered locus">SNSL254_A3310</name>
</gene>
<comment type="function">
    <text evidence="1">Catalyzes the NAD-dependent conversion of D-erythrose 4-phosphate to 4-phosphoerythronate.</text>
</comment>
<comment type="catalytic activity">
    <reaction evidence="1">
        <text>D-erythrose 4-phosphate + NAD(+) + H2O = 4-phospho-D-erythronate + NADH + 2 H(+)</text>
        <dbReference type="Rhea" id="RHEA:12056"/>
        <dbReference type="ChEBI" id="CHEBI:15377"/>
        <dbReference type="ChEBI" id="CHEBI:15378"/>
        <dbReference type="ChEBI" id="CHEBI:16897"/>
        <dbReference type="ChEBI" id="CHEBI:57540"/>
        <dbReference type="ChEBI" id="CHEBI:57945"/>
        <dbReference type="ChEBI" id="CHEBI:58766"/>
        <dbReference type="EC" id="1.2.1.72"/>
    </reaction>
</comment>
<comment type="pathway">
    <text evidence="1">Cofactor biosynthesis; pyridoxine 5'-phosphate biosynthesis; pyridoxine 5'-phosphate from D-erythrose 4-phosphate: step 1/5.</text>
</comment>
<comment type="subunit">
    <text evidence="1">Homotetramer.</text>
</comment>
<comment type="subcellular location">
    <subcellularLocation>
        <location evidence="1">Cytoplasm</location>
    </subcellularLocation>
</comment>
<comment type="similarity">
    <text evidence="1">Belongs to the glyceraldehyde-3-phosphate dehydrogenase family. Epd subfamily.</text>
</comment>
<reference key="1">
    <citation type="journal article" date="2011" name="J. Bacteriol.">
        <title>Comparative genomics of 28 Salmonella enterica isolates: evidence for CRISPR-mediated adaptive sublineage evolution.</title>
        <authorList>
            <person name="Fricke W.F."/>
            <person name="Mammel M.K."/>
            <person name="McDermott P.F."/>
            <person name="Tartera C."/>
            <person name="White D.G."/>
            <person name="Leclerc J.E."/>
            <person name="Ravel J."/>
            <person name="Cebula T.A."/>
        </authorList>
    </citation>
    <scope>NUCLEOTIDE SEQUENCE [LARGE SCALE GENOMIC DNA]</scope>
    <source>
        <strain>SL254</strain>
    </source>
</reference>
<accession>B4T5H2</accession>
<organism>
    <name type="scientific">Salmonella newport (strain SL254)</name>
    <dbReference type="NCBI Taxonomy" id="423368"/>
    <lineage>
        <taxon>Bacteria</taxon>
        <taxon>Pseudomonadati</taxon>
        <taxon>Pseudomonadota</taxon>
        <taxon>Gammaproteobacteria</taxon>
        <taxon>Enterobacterales</taxon>
        <taxon>Enterobacteriaceae</taxon>
        <taxon>Salmonella</taxon>
    </lineage>
</organism>